<evidence type="ECO:0000255" key="1">
    <source>
        <dbReference type="HAMAP-Rule" id="MF_00147"/>
    </source>
</evidence>
<proteinExistence type="inferred from homology"/>
<feature type="chain" id="PRO_1000096512" description="Triosephosphate isomerase">
    <location>
        <begin position="1"/>
        <end position="258"/>
    </location>
</feature>
<feature type="active site" description="Electrophile" evidence="1">
    <location>
        <position position="105"/>
    </location>
</feature>
<feature type="active site" description="Proton acceptor" evidence="1">
    <location>
        <position position="176"/>
    </location>
</feature>
<feature type="binding site" evidence="1">
    <location>
        <begin position="9"/>
        <end position="11"/>
    </location>
    <ligand>
        <name>substrate</name>
    </ligand>
</feature>
<feature type="binding site" evidence="1">
    <location>
        <position position="182"/>
    </location>
    <ligand>
        <name>substrate</name>
    </ligand>
</feature>
<feature type="binding site" evidence="1">
    <location>
        <position position="214"/>
    </location>
    <ligand>
        <name>substrate</name>
    </ligand>
</feature>
<name>TPIS_MYCAP</name>
<comment type="function">
    <text evidence="1">Involved in the gluconeogenesis. Catalyzes stereospecifically the conversion of dihydroxyacetone phosphate (DHAP) to D-glyceraldehyde-3-phosphate (G3P).</text>
</comment>
<comment type="catalytic activity">
    <reaction evidence="1">
        <text>D-glyceraldehyde 3-phosphate = dihydroxyacetone phosphate</text>
        <dbReference type="Rhea" id="RHEA:18585"/>
        <dbReference type="ChEBI" id="CHEBI:57642"/>
        <dbReference type="ChEBI" id="CHEBI:59776"/>
        <dbReference type="EC" id="5.3.1.1"/>
    </reaction>
</comment>
<comment type="pathway">
    <text evidence="1">Carbohydrate biosynthesis; gluconeogenesis.</text>
</comment>
<comment type="pathway">
    <text evidence="1">Carbohydrate degradation; glycolysis; D-glyceraldehyde 3-phosphate from glycerone phosphate: step 1/1.</text>
</comment>
<comment type="subunit">
    <text evidence="1">Homodimer.</text>
</comment>
<comment type="subcellular location">
    <subcellularLocation>
        <location evidence="1">Cytoplasm</location>
    </subcellularLocation>
</comment>
<comment type="similarity">
    <text evidence="1">Belongs to the triosephosphate isomerase family.</text>
</comment>
<accession>A5IYV3</accession>
<sequence>MKQFIVIGNWKMYKTFTETLNFFDEFAIEYKKFRKANPQLIPYIDNNVFGVAPSQCNLTAYFTNRVPELKLCSQNMSKNEEGAFTGEVSARMLQDINVSYALCGHSERRRYHTNHENDESTHLKIKQSVKYDITPIICIGESKEDRDAGRTEAAIHKQLQILLDEVNIHKVIIAYEPVWSIGTGITPTPEEVENVSALIHKLTSPEVPVLYGGSVNENNINDFTKLPNLNGFLVGSASLKIDKFLKLISVNSDGIMPK</sequence>
<keyword id="KW-0963">Cytoplasm</keyword>
<keyword id="KW-0312">Gluconeogenesis</keyword>
<keyword id="KW-0324">Glycolysis</keyword>
<keyword id="KW-0413">Isomerase</keyword>
<keyword id="KW-1185">Reference proteome</keyword>
<reference key="1">
    <citation type="journal article" date="2007" name="PLoS Genet.">
        <title>Being pathogenic, plastic, and sexual while living with a nearly minimal bacterial genome.</title>
        <authorList>
            <person name="Sirand-Pugnet P."/>
            <person name="Lartigue C."/>
            <person name="Marenda M."/>
            <person name="Jacob D."/>
            <person name="Barre A."/>
            <person name="Barbe V."/>
            <person name="Schenowitz C."/>
            <person name="Mangenot S."/>
            <person name="Couloux A."/>
            <person name="Segurens B."/>
            <person name="de Daruvar A."/>
            <person name="Blanchard A."/>
            <person name="Citti C."/>
        </authorList>
    </citation>
    <scope>NUCLEOTIDE SEQUENCE [LARGE SCALE GENOMIC DNA]</scope>
    <source>
        <strain>NCTC 10123 / CIP 59.7 / PG2</strain>
    </source>
</reference>
<gene>
    <name evidence="1" type="primary">tpiA</name>
    <name type="ordered locus">MAG5140</name>
</gene>
<protein>
    <recommendedName>
        <fullName evidence="1">Triosephosphate isomerase</fullName>
        <shortName evidence="1">TIM</shortName>
        <shortName evidence="1">TPI</shortName>
        <ecNumber evidence="1">5.3.1.1</ecNumber>
    </recommendedName>
    <alternativeName>
        <fullName evidence="1">Triose-phosphate isomerase</fullName>
    </alternativeName>
</protein>
<organism>
    <name type="scientific">Mycoplasmopsis agalactiae (strain NCTC 10123 / CIP 59.7 / PG2)</name>
    <name type="common">Mycoplasma agalactiae</name>
    <dbReference type="NCBI Taxonomy" id="347257"/>
    <lineage>
        <taxon>Bacteria</taxon>
        <taxon>Bacillati</taxon>
        <taxon>Mycoplasmatota</taxon>
        <taxon>Mycoplasmoidales</taxon>
        <taxon>Metamycoplasmataceae</taxon>
        <taxon>Mycoplasmopsis</taxon>
    </lineage>
</organism>
<dbReference type="EC" id="5.3.1.1" evidence="1"/>
<dbReference type="EMBL" id="CU179680">
    <property type="protein sequence ID" value="CAL59212.1"/>
    <property type="molecule type" value="Genomic_DNA"/>
</dbReference>
<dbReference type="RefSeq" id="WP_011949680.1">
    <property type="nucleotide sequence ID" value="NC_009497.1"/>
</dbReference>
<dbReference type="SMR" id="A5IYV3"/>
<dbReference type="STRING" id="347257.MAG5140"/>
<dbReference type="GeneID" id="93358253"/>
<dbReference type="KEGG" id="maa:MAG5140"/>
<dbReference type="HOGENOM" id="CLU_024251_2_3_14"/>
<dbReference type="UniPathway" id="UPA00109">
    <property type="reaction ID" value="UER00189"/>
</dbReference>
<dbReference type="UniPathway" id="UPA00138"/>
<dbReference type="Proteomes" id="UP000007065">
    <property type="component" value="Chromosome"/>
</dbReference>
<dbReference type="GO" id="GO:0005829">
    <property type="term" value="C:cytosol"/>
    <property type="evidence" value="ECO:0007669"/>
    <property type="project" value="TreeGrafter"/>
</dbReference>
<dbReference type="GO" id="GO:0004807">
    <property type="term" value="F:triose-phosphate isomerase activity"/>
    <property type="evidence" value="ECO:0007669"/>
    <property type="project" value="UniProtKB-UniRule"/>
</dbReference>
<dbReference type="GO" id="GO:0006094">
    <property type="term" value="P:gluconeogenesis"/>
    <property type="evidence" value="ECO:0007669"/>
    <property type="project" value="UniProtKB-UniRule"/>
</dbReference>
<dbReference type="GO" id="GO:0046166">
    <property type="term" value="P:glyceraldehyde-3-phosphate biosynthetic process"/>
    <property type="evidence" value="ECO:0007669"/>
    <property type="project" value="TreeGrafter"/>
</dbReference>
<dbReference type="GO" id="GO:0019563">
    <property type="term" value="P:glycerol catabolic process"/>
    <property type="evidence" value="ECO:0007669"/>
    <property type="project" value="TreeGrafter"/>
</dbReference>
<dbReference type="GO" id="GO:0006096">
    <property type="term" value="P:glycolytic process"/>
    <property type="evidence" value="ECO:0007669"/>
    <property type="project" value="UniProtKB-UniRule"/>
</dbReference>
<dbReference type="CDD" id="cd00311">
    <property type="entry name" value="TIM"/>
    <property type="match status" value="1"/>
</dbReference>
<dbReference type="Gene3D" id="3.20.20.70">
    <property type="entry name" value="Aldolase class I"/>
    <property type="match status" value="1"/>
</dbReference>
<dbReference type="HAMAP" id="MF_00147_B">
    <property type="entry name" value="TIM_B"/>
    <property type="match status" value="1"/>
</dbReference>
<dbReference type="InterPro" id="IPR013785">
    <property type="entry name" value="Aldolase_TIM"/>
</dbReference>
<dbReference type="InterPro" id="IPR035990">
    <property type="entry name" value="TIM_sf"/>
</dbReference>
<dbReference type="InterPro" id="IPR022896">
    <property type="entry name" value="TrioseP_Isoase_bac/euk"/>
</dbReference>
<dbReference type="InterPro" id="IPR000652">
    <property type="entry name" value="Triosephosphate_isomerase"/>
</dbReference>
<dbReference type="InterPro" id="IPR020861">
    <property type="entry name" value="Triosephosphate_isomerase_AS"/>
</dbReference>
<dbReference type="NCBIfam" id="TIGR00419">
    <property type="entry name" value="tim"/>
    <property type="match status" value="1"/>
</dbReference>
<dbReference type="PANTHER" id="PTHR21139">
    <property type="entry name" value="TRIOSEPHOSPHATE ISOMERASE"/>
    <property type="match status" value="1"/>
</dbReference>
<dbReference type="PANTHER" id="PTHR21139:SF42">
    <property type="entry name" value="TRIOSEPHOSPHATE ISOMERASE"/>
    <property type="match status" value="1"/>
</dbReference>
<dbReference type="Pfam" id="PF00121">
    <property type="entry name" value="TIM"/>
    <property type="match status" value="1"/>
</dbReference>
<dbReference type="SUPFAM" id="SSF51351">
    <property type="entry name" value="Triosephosphate isomerase (TIM)"/>
    <property type="match status" value="1"/>
</dbReference>
<dbReference type="PROSITE" id="PS00171">
    <property type="entry name" value="TIM_1"/>
    <property type="match status" value="1"/>
</dbReference>
<dbReference type="PROSITE" id="PS51440">
    <property type="entry name" value="TIM_2"/>
    <property type="match status" value="1"/>
</dbReference>